<name>CYB_ANGDI</name>
<comment type="function">
    <text evidence="2">Component of the ubiquinol-cytochrome c reductase complex (complex III or cytochrome b-c1 complex) that is part of the mitochondrial respiratory chain. The b-c1 complex mediates electron transfer from ubiquinol to cytochrome c. Contributes to the generation of a proton gradient across the mitochondrial membrane that is then used for ATP synthesis.</text>
</comment>
<comment type="cofactor">
    <cofactor evidence="2">
        <name>heme b</name>
        <dbReference type="ChEBI" id="CHEBI:60344"/>
    </cofactor>
    <text evidence="2">Binds 2 heme b groups non-covalently.</text>
</comment>
<comment type="subunit">
    <text evidence="2">The cytochrome bc1 complex contains 3 respiratory subunits (MT-CYB, CYC1 and UQCRFS1), 2 core proteins (UQCRC1 and UQCRC2) and probably 6 low-molecular weight proteins.</text>
</comment>
<comment type="subcellular location">
    <subcellularLocation>
        <location evidence="2">Mitochondrion inner membrane</location>
        <topology evidence="2">Multi-pass membrane protein</topology>
    </subcellularLocation>
</comment>
<comment type="miscellaneous">
    <text evidence="1">Heme 1 (or BL or b562) is low-potential and absorbs at about 562 nm, and heme 2 (or BH or b566) is high-potential and absorbs at about 566 nm.</text>
</comment>
<comment type="similarity">
    <text evidence="3 4">Belongs to the cytochrome b family.</text>
</comment>
<comment type="caution">
    <text evidence="2">The full-length protein contains only eight transmembrane helices, not nine as predicted by bioinformatics tools.</text>
</comment>
<proteinExistence type="inferred from homology"/>
<gene>
    <name type="primary">mt-cyb</name>
    <name type="synonym">cob</name>
    <name type="synonym">cytb</name>
    <name type="synonym">mtcyb</name>
</gene>
<accession>O99240</accession>
<feature type="chain" id="PRO_0000060578" description="Cytochrome b">
    <location>
        <begin position="1"/>
        <end position="379"/>
    </location>
</feature>
<feature type="transmembrane region" description="Helical" evidence="2">
    <location>
        <begin position="33"/>
        <end position="53"/>
    </location>
</feature>
<feature type="transmembrane region" description="Helical" evidence="2">
    <location>
        <begin position="77"/>
        <end position="98"/>
    </location>
</feature>
<feature type="transmembrane region" description="Helical" evidence="2">
    <location>
        <begin position="113"/>
        <end position="133"/>
    </location>
</feature>
<feature type="transmembrane region" description="Helical" evidence="2">
    <location>
        <begin position="178"/>
        <end position="198"/>
    </location>
</feature>
<feature type="transmembrane region" description="Helical" evidence="2">
    <location>
        <begin position="226"/>
        <end position="246"/>
    </location>
</feature>
<feature type="transmembrane region" description="Helical" evidence="2">
    <location>
        <begin position="288"/>
        <end position="308"/>
    </location>
</feature>
<feature type="transmembrane region" description="Helical" evidence="2">
    <location>
        <begin position="320"/>
        <end position="340"/>
    </location>
</feature>
<feature type="transmembrane region" description="Helical" evidence="2">
    <location>
        <begin position="347"/>
        <end position="367"/>
    </location>
</feature>
<feature type="binding site" description="axial binding residue" evidence="2">
    <location>
        <position position="83"/>
    </location>
    <ligand>
        <name>heme b</name>
        <dbReference type="ChEBI" id="CHEBI:60344"/>
        <label>b562</label>
    </ligand>
    <ligandPart>
        <name>Fe</name>
        <dbReference type="ChEBI" id="CHEBI:18248"/>
    </ligandPart>
</feature>
<feature type="binding site" description="axial binding residue" evidence="2">
    <location>
        <position position="97"/>
    </location>
    <ligand>
        <name>heme b</name>
        <dbReference type="ChEBI" id="CHEBI:60344"/>
        <label>b566</label>
    </ligand>
    <ligandPart>
        <name>Fe</name>
        <dbReference type="ChEBI" id="CHEBI:18248"/>
    </ligandPart>
</feature>
<feature type="binding site" description="axial binding residue" evidence="2">
    <location>
        <position position="182"/>
    </location>
    <ligand>
        <name>heme b</name>
        <dbReference type="ChEBI" id="CHEBI:60344"/>
        <label>b562</label>
    </ligand>
    <ligandPart>
        <name>Fe</name>
        <dbReference type="ChEBI" id="CHEBI:18248"/>
    </ligandPart>
</feature>
<feature type="binding site" description="axial binding residue" evidence="2">
    <location>
        <position position="196"/>
    </location>
    <ligand>
        <name>heme b</name>
        <dbReference type="ChEBI" id="CHEBI:60344"/>
        <label>b566</label>
    </ligand>
    <ligandPart>
        <name>Fe</name>
        <dbReference type="ChEBI" id="CHEBI:18248"/>
    </ligandPart>
</feature>
<feature type="binding site" evidence="2">
    <location>
        <position position="201"/>
    </location>
    <ligand>
        <name>a ubiquinone</name>
        <dbReference type="ChEBI" id="CHEBI:16389"/>
    </ligand>
</feature>
<geneLocation type="mitochondrion"/>
<reference key="1">
    <citation type="thesis" date="1998" institute="Ocean Research Institute / University of Tokyo" country="Japan">
        <title>Molecular phylogeny and evolution of the freshwater eels, genus Anguilla.</title>
        <authorList>
            <person name="Aoyama J."/>
        </authorList>
    </citation>
    <scope>NUCLEOTIDE SEQUENCE [GENOMIC DNA]</scope>
    <source>
        <tissue>Liver</tissue>
    </source>
</reference>
<reference key="2">
    <citation type="journal article" date="2001" name="Mol. Phylogenet. Evol.">
        <title>A phylogeny of freshwater eels inferred from mitochondrial genes.</title>
        <authorList>
            <person name="Lin Y.S."/>
            <person name="Poh Y.P."/>
            <person name="Tzeng C.S."/>
        </authorList>
    </citation>
    <scope>NUCLEOTIDE SEQUENCE [GENOMIC DNA]</scope>
</reference>
<reference key="3">
    <citation type="journal article" date="2005" name="Mol. Phylogenet. Evol.">
        <title>Molecular phylogeny and evolution of the freshwater eels genus Anguilla based on the whole mitochondrial genome sequences.</title>
        <authorList>
            <person name="Minegishi Y."/>
            <person name="Aoyama J."/>
            <person name="Inoue J.G."/>
            <person name="Miya M."/>
            <person name="Nishida M."/>
            <person name="Tsukamoto K."/>
        </authorList>
    </citation>
    <scope>NUCLEOTIDE SEQUENCE [GENOMIC DNA]</scope>
</reference>
<dbReference type="EMBL" id="AB021770">
    <property type="protein sequence ID" value="BAB20293.1"/>
    <property type="molecule type" value="Genomic_DNA"/>
</dbReference>
<dbReference type="EMBL" id="AF006711">
    <property type="protein sequence ID" value="AAC98874.1"/>
    <property type="molecule type" value="Genomic_DNA"/>
</dbReference>
<dbReference type="EMBL" id="AP007240">
    <property type="protein sequence ID" value="BAD78074.1"/>
    <property type="molecule type" value="Genomic_DNA"/>
</dbReference>
<dbReference type="RefSeq" id="YP_163919.1">
    <property type="nucleotide sequence ID" value="NC_006538.1"/>
</dbReference>
<dbReference type="SMR" id="O99240"/>
<dbReference type="GeneID" id="3190479"/>
<dbReference type="CTD" id="4519"/>
<dbReference type="GO" id="GO:0005743">
    <property type="term" value="C:mitochondrial inner membrane"/>
    <property type="evidence" value="ECO:0007669"/>
    <property type="project" value="UniProtKB-SubCell"/>
</dbReference>
<dbReference type="GO" id="GO:0045275">
    <property type="term" value="C:respiratory chain complex III"/>
    <property type="evidence" value="ECO:0007669"/>
    <property type="project" value="InterPro"/>
</dbReference>
<dbReference type="GO" id="GO:0046872">
    <property type="term" value="F:metal ion binding"/>
    <property type="evidence" value="ECO:0007669"/>
    <property type="project" value="UniProtKB-KW"/>
</dbReference>
<dbReference type="GO" id="GO:0008121">
    <property type="term" value="F:ubiquinol-cytochrome-c reductase activity"/>
    <property type="evidence" value="ECO:0007669"/>
    <property type="project" value="InterPro"/>
</dbReference>
<dbReference type="GO" id="GO:0006122">
    <property type="term" value="P:mitochondrial electron transport, ubiquinol to cytochrome c"/>
    <property type="evidence" value="ECO:0007669"/>
    <property type="project" value="TreeGrafter"/>
</dbReference>
<dbReference type="CDD" id="cd00290">
    <property type="entry name" value="cytochrome_b_C"/>
    <property type="match status" value="1"/>
</dbReference>
<dbReference type="CDD" id="cd00284">
    <property type="entry name" value="Cytochrome_b_N"/>
    <property type="match status" value="1"/>
</dbReference>
<dbReference type="FunFam" id="1.20.810.10:FF:000002">
    <property type="entry name" value="Cytochrome b"/>
    <property type="match status" value="1"/>
</dbReference>
<dbReference type="Gene3D" id="1.20.810.10">
    <property type="entry name" value="Cytochrome Bc1 Complex, Chain C"/>
    <property type="match status" value="1"/>
</dbReference>
<dbReference type="InterPro" id="IPR005798">
    <property type="entry name" value="Cyt_b/b6_C"/>
</dbReference>
<dbReference type="InterPro" id="IPR036150">
    <property type="entry name" value="Cyt_b/b6_C_sf"/>
</dbReference>
<dbReference type="InterPro" id="IPR005797">
    <property type="entry name" value="Cyt_b/b6_N"/>
</dbReference>
<dbReference type="InterPro" id="IPR027387">
    <property type="entry name" value="Cytb/b6-like_sf"/>
</dbReference>
<dbReference type="InterPro" id="IPR030689">
    <property type="entry name" value="Cytochrome_b"/>
</dbReference>
<dbReference type="InterPro" id="IPR048260">
    <property type="entry name" value="Cytochrome_b_C_euk/bac"/>
</dbReference>
<dbReference type="InterPro" id="IPR048259">
    <property type="entry name" value="Cytochrome_b_N_euk/bac"/>
</dbReference>
<dbReference type="InterPro" id="IPR016174">
    <property type="entry name" value="Di-haem_cyt_TM"/>
</dbReference>
<dbReference type="PANTHER" id="PTHR19271">
    <property type="entry name" value="CYTOCHROME B"/>
    <property type="match status" value="1"/>
</dbReference>
<dbReference type="PANTHER" id="PTHR19271:SF16">
    <property type="entry name" value="CYTOCHROME B"/>
    <property type="match status" value="1"/>
</dbReference>
<dbReference type="Pfam" id="PF00032">
    <property type="entry name" value="Cytochrom_B_C"/>
    <property type="match status" value="1"/>
</dbReference>
<dbReference type="Pfam" id="PF00033">
    <property type="entry name" value="Cytochrome_B"/>
    <property type="match status" value="1"/>
</dbReference>
<dbReference type="PIRSF" id="PIRSF038885">
    <property type="entry name" value="COB"/>
    <property type="match status" value="1"/>
</dbReference>
<dbReference type="SUPFAM" id="SSF81648">
    <property type="entry name" value="a domain/subunit of cytochrome bc1 complex (Ubiquinol-cytochrome c reductase)"/>
    <property type="match status" value="1"/>
</dbReference>
<dbReference type="SUPFAM" id="SSF81342">
    <property type="entry name" value="Transmembrane di-heme cytochromes"/>
    <property type="match status" value="1"/>
</dbReference>
<dbReference type="PROSITE" id="PS51003">
    <property type="entry name" value="CYTB_CTER"/>
    <property type="match status" value="1"/>
</dbReference>
<dbReference type="PROSITE" id="PS51002">
    <property type="entry name" value="CYTB_NTER"/>
    <property type="match status" value="1"/>
</dbReference>
<keyword id="KW-0249">Electron transport</keyword>
<keyword id="KW-0349">Heme</keyword>
<keyword id="KW-0408">Iron</keyword>
<keyword id="KW-0472">Membrane</keyword>
<keyword id="KW-0479">Metal-binding</keyword>
<keyword id="KW-0496">Mitochondrion</keyword>
<keyword id="KW-0999">Mitochondrion inner membrane</keyword>
<keyword id="KW-0679">Respiratory chain</keyword>
<keyword id="KW-0812">Transmembrane</keyword>
<keyword id="KW-1133">Transmembrane helix</keyword>
<keyword id="KW-0813">Transport</keyword>
<keyword id="KW-0830">Ubiquinone</keyword>
<sequence>MANLRKTHPLLKIANDALVDLPTPSNISAWWNFGSLLGLCLISQILTGLFLAMHYTSDISTAFSSVAHICRDVNYGWLIRNLHANGASFFFICLYLHIARGLYYGSYLYKETWNIGVVLFLLVMMTAFVGYVLPWGQMSFWGATVITNLLSAVPYVGNSLVQWIWGGFSVDNATLTRFFAFHFLFPFVVAGATMIHLLFLHETGSSNPVGLNSDADKVPFHPYFSYKDLLGFIIMLTALTMLALFYPNLLGDPDNFTPANPMVTPPHIKPEWYFLFAYAILRSIPNKLGGVLALLSSILVLMVVPILHTSKQRGLTFRPASQLLFWILVADMLVLTWIGGMPVEHPYIIIGQVASVLYFSLFLVLNPLVGWLENKVMNW</sequence>
<organism>
    <name type="scientific">Anguilla dieffenbachii</name>
    <name type="common">New Zealand longfin eel</name>
    <dbReference type="NCBI Taxonomy" id="61127"/>
    <lineage>
        <taxon>Eukaryota</taxon>
        <taxon>Metazoa</taxon>
        <taxon>Chordata</taxon>
        <taxon>Craniata</taxon>
        <taxon>Vertebrata</taxon>
        <taxon>Euteleostomi</taxon>
        <taxon>Actinopterygii</taxon>
        <taxon>Neopterygii</taxon>
        <taxon>Teleostei</taxon>
        <taxon>Anguilliformes</taxon>
        <taxon>Anguillidae</taxon>
        <taxon>Anguilla</taxon>
    </lineage>
</organism>
<protein>
    <recommendedName>
        <fullName>Cytochrome b</fullName>
    </recommendedName>
    <alternativeName>
        <fullName>Complex III subunit 3</fullName>
    </alternativeName>
    <alternativeName>
        <fullName>Complex III subunit III</fullName>
    </alternativeName>
    <alternativeName>
        <fullName>Cytochrome b-c1 complex subunit 3</fullName>
    </alternativeName>
    <alternativeName>
        <fullName>Ubiquinol-cytochrome-c reductase complex cytochrome b subunit</fullName>
    </alternativeName>
</protein>
<evidence type="ECO:0000250" key="1"/>
<evidence type="ECO:0000250" key="2">
    <source>
        <dbReference type="UniProtKB" id="P00157"/>
    </source>
</evidence>
<evidence type="ECO:0000255" key="3">
    <source>
        <dbReference type="PROSITE-ProRule" id="PRU00967"/>
    </source>
</evidence>
<evidence type="ECO:0000255" key="4">
    <source>
        <dbReference type="PROSITE-ProRule" id="PRU00968"/>
    </source>
</evidence>